<keyword id="KW-0167">Capsid protein</keyword>
<keyword id="KW-0903">Direct protein sequencing</keyword>
<keyword id="KW-1031">Host cell junction</keyword>
<keyword id="KW-1035">Host cytoplasm</keyword>
<keyword id="KW-1048">Host nucleus</keyword>
<keyword id="KW-0813">Transport</keyword>
<keyword id="KW-0916">Viral movement protein</keyword>
<keyword id="KW-0946">Virion</keyword>
<dbReference type="EMBL" id="X15163">
    <property type="protein sequence ID" value="CAA33255.1"/>
    <property type="molecule type" value="Genomic_RNA"/>
</dbReference>
<dbReference type="PIR" id="S06187">
    <property type="entry name" value="S06187"/>
</dbReference>
<dbReference type="RefSeq" id="NP_619704.1">
    <property type="nucleotide sequence ID" value="NC_003621.1"/>
</dbReference>
<dbReference type="SMR" id="P13026"/>
<dbReference type="GeneID" id="956640"/>
<dbReference type="KEGG" id="vg:956640"/>
<dbReference type="Proteomes" id="UP000008624">
    <property type="component" value="Genome"/>
</dbReference>
<dbReference type="GO" id="GO:0030430">
    <property type="term" value="C:host cell cytoplasm"/>
    <property type="evidence" value="ECO:0007669"/>
    <property type="project" value="UniProtKB-SubCell"/>
</dbReference>
<dbReference type="GO" id="GO:0042025">
    <property type="term" value="C:host cell nucleus"/>
    <property type="evidence" value="ECO:0007669"/>
    <property type="project" value="UniProtKB-SubCell"/>
</dbReference>
<dbReference type="GO" id="GO:0044219">
    <property type="term" value="C:host cell plasmodesma"/>
    <property type="evidence" value="ECO:0007669"/>
    <property type="project" value="UniProtKB-SubCell"/>
</dbReference>
<dbReference type="GO" id="GO:0019028">
    <property type="term" value="C:viral capsid"/>
    <property type="evidence" value="ECO:0007669"/>
    <property type="project" value="UniProtKB-KW"/>
</dbReference>
<dbReference type="GO" id="GO:0005198">
    <property type="term" value="F:structural molecule activity"/>
    <property type="evidence" value="ECO:0007669"/>
    <property type="project" value="InterPro"/>
</dbReference>
<dbReference type="GO" id="GO:0046740">
    <property type="term" value="P:transport of virus in host, cell to cell"/>
    <property type="evidence" value="ECO:0007669"/>
    <property type="project" value="UniProtKB-KW"/>
</dbReference>
<dbReference type="Gene3D" id="2.60.120.20">
    <property type="match status" value="2"/>
</dbReference>
<dbReference type="InterPro" id="IPR005054">
    <property type="entry name" value="Nepo_coat"/>
</dbReference>
<dbReference type="InterPro" id="IPR005305">
    <property type="entry name" value="Nepo_coat_C"/>
</dbReference>
<dbReference type="InterPro" id="IPR005306">
    <property type="entry name" value="Nepo_coat_N"/>
</dbReference>
<dbReference type="InterPro" id="IPR029053">
    <property type="entry name" value="Viral_coat"/>
</dbReference>
<dbReference type="Pfam" id="PF03391">
    <property type="entry name" value="Nepo_coat"/>
    <property type="match status" value="1"/>
</dbReference>
<dbReference type="Pfam" id="PF03688">
    <property type="entry name" value="Nepo_coat_C"/>
    <property type="match status" value="1"/>
</dbReference>
<dbReference type="Pfam" id="PF03689">
    <property type="entry name" value="Nepo_coat_N"/>
    <property type="match status" value="1"/>
</dbReference>
<dbReference type="SUPFAM" id="SSF88633">
    <property type="entry name" value="Positive stranded ssRNA viruses"/>
    <property type="match status" value="3"/>
</dbReference>
<sequence>MGFSEFFASALGTVARAKATLQGGFARFLSETVVTLQAASPEMRKFAYSKLWEEVDSVKELKPLTAQELVATLRKELWCAQVRAQKCTLASTSRFCTCGGIPGEATPTVIKETVHVDECPNGRNLCRHGTRCLRHGGPGSFQQEREVQVDAPKCPHCAGTGIVPASASWREIRRCWREQRKVHSLPSLPLHPDVLFEGTNAWQTRLRWLKTWRHVLGDVKPCTPEKWMQAAQIMRTCAVPSFENPIPGQFGYERLYNGEGKEEYWLQIPATDKYTDLIINWWHAKNTPGWEEPSSSLMDFKRNRMGPCLHIVEKRVRNSYVAPPWKPWGEDIDILSVMDSLSSQLEDFLDVFYDCAAQFDGELEFSLSNDRLSSVTGELGGVPISIGAPSKISNTPPKVNFAELYGNLVRHNHRKISALRPILMAHPDQDEIEDQLDHLENKQGGEIVSTPSFIKMLKEKRKEVRGKEFEEGSEGRLVRSKDLELSKKDIFLAHTLMDKFHGMSIVKKFGKSDPKLTKVCVDLTNQEEVIKYPVKELQTTSEGVLSAQTFTVLNRPQFKELNRLAEVGWKEAKSVCLNLHIRSYLPVHLPVYAFCVIMWGHSSNAEQASLSGAYVYLGDQEASVLQLPLLCGYIGNALEDMEAYKRSLVLSTCFFGTSGLSPGQNMFGITAVEFTEYLPTSYGGITHERDSWNQMLRNHQGVDKQRFISGFNVVDFVEAGKEKQLHFPDFDLQPVPKHQPIVRTFGKEKQPLLNKSRSMRVKTFTSFRAGNIPIGRQIDNTAEAINFELGRASTSNAINPRLDTSETNLRAGGEFAFIHTIDLPTAVTEGQVLAKIDIFKKIQDAKSMVCVQWMQAGYVNKNLTFISHLAPSQFCGVAIWYIFDAYGKIPSDVTTSLELEIARSLCPHVHVLRDSKTSVWTIDFHKICGQSLNFSGRGFSKPTLWVIAASTAQLPWSAQVTYRLEALAQGDEIAHGLATRSIVTYPISLEHLKDIEIMLPPRQMAIGNAGSINFPLSFAVQQKSSSGRIAYSYAAGLLSHFLGIGGTIHFKIQCTSSAFVTARLRVALWGDTITLEQLSQMPHVDCDVDVVSSLKIQSPFYATANFGDSGARFWVTPMSSPMAPETMESKLEYYIQILGIDADPPMCRQINYDQRFAWFTLLRPPDPKLSKILKLTLPSRVCNIAYKEATVTNYVNAFAIMCATTGMHAGKCILHFSWTLNKGTSFKDLQGHISFYSGMGDSTIGEHHGEFHLGGPLSSSLAVPFEFGSFAGPVTSGGTPFTSENWLRVETAHWDWLTSLTVDIQVLPGFRFYGRSAGPLTIPS</sequence>
<evidence type="ECO:0000250" key="1"/>
<evidence type="ECO:0000305" key="2"/>
<proteinExistence type="evidence at protein level"/>
<organismHost>
    <name type="scientific">Apium graveolens</name>
    <name type="common">Celery</name>
    <dbReference type="NCBI Taxonomy" id="4045"/>
</organismHost>
<organismHost>
    <name type="scientific">Vitis vinifera</name>
    <name type="common">Grape</name>
    <dbReference type="NCBI Taxonomy" id="29760"/>
</organismHost>
<feature type="chain" id="PRO_0000037121" description="Protein 2A" evidence="1">
    <location>
        <begin position="1"/>
        <end status="unknown"/>
    </location>
</feature>
<feature type="chain" id="PRO_0000037122" description="Movement protein" evidence="1">
    <location>
        <begin status="unknown"/>
        <end position="810"/>
    </location>
</feature>
<feature type="chain" id="PRO_0000037123" description="Coat protein" evidence="1">
    <location>
        <begin position="811"/>
        <end position="1324"/>
    </location>
</feature>
<feature type="sequence variant">
    <original>N</original>
    <variation>D</variation>
    <location>
        <position position="400"/>
    </location>
</feature>
<feature type="sequence variant">
    <original>I</original>
    <variation>T</variation>
    <location>
        <position position="1006"/>
    </location>
</feature>
<reference key="1">
    <citation type="journal article" date="1989" name="Nucleic Acids Res.">
        <title>Nucleotide sequence and genetic organization of Hungarian grapevine chrome mosaic nepovirus RNA2.</title>
        <authorList>
            <person name="Brault V."/>
            <person name="Hibrand L."/>
            <person name="Candresse T."/>
            <person name="le Gall O."/>
            <person name="Dunez J."/>
        </authorList>
    </citation>
    <scope>NUCLEOTIDE SEQUENCE [GENOMIC RNA]</scope>
    <scope>PROTEIN SEQUENCE OF 814-822</scope>
</reference>
<protein>
    <recommendedName>
        <fullName>RNA2 polyprotein</fullName>
    </recommendedName>
    <alternativeName>
        <fullName>P2</fullName>
    </alternativeName>
    <component>
        <recommendedName>
            <fullName>Protein 2A</fullName>
            <shortName>P2A</shortName>
        </recommendedName>
    </component>
    <component>
        <recommendedName>
            <fullName>Movement protein</fullName>
        </recommendedName>
        <alternativeName>
            <fullName>2B-MP</fullName>
        </alternativeName>
    </component>
    <component>
        <recommendedName>
            <fullName>Coat protein</fullName>
        </recommendedName>
        <alternativeName>
            <fullName>2C-CP</fullName>
        </alternativeName>
    </component>
</protein>
<organism>
    <name type="scientific">Grapevine chrome mosaic virus</name>
    <name type="common">GCMV</name>
    <name type="synonym">Hungarian grapevine chrome mosaic virus</name>
    <dbReference type="NCBI Taxonomy" id="12273"/>
    <lineage>
        <taxon>Viruses</taxon>
        <taxon>Riboviria</taxon>
        <taxon>Orthornavirae</taxon>
        <taxon>Pisuviricota</taxon>
        <taxon>Pisoniviricetes</taxon>
        <taxon>Picornavirales</taxon>
        <taxon>Secoviridae</taxon>
        <taxon>Comovirinae</taxon>
        <taxon>Nepovirus</taxon>
        <taxon>Nepovirus chromusivum</taxon>
    </lineage>
</organism>
<accession>P13026</accession>
<comment type="function">
    <molecule>Protein 2A</molecule>
    <text evidence="1">Implicated in RNA2 replication. Could also be required for nematode transmission of the virus (By similarity).</text>
</comment>
<comment type="function">
    <molecule>Movement protein</molecule>
    <text evidence="1">Transports viral genome to neighboring plant cells directly through plasmosdesmata, without any budding. The movement protein allows efficient cell to cell propagation, by bypassing the host cell wall barrier. Acts by forming a tubular structure at the host plasmodesmata, enlarging it enough to allow free passage of virion capsids (By similarity).</text>
</comment>
<comment type="subcellular location">
    <subcellularLocation>
        <location>Host cell junction</location>
        <location>Host plasmodesma</location>
    </subcellularLocation>
    <text evidence="1">Assembles in tubules that are embedded within modified plasmodesmata (By similarity). Movement proteins are targeted preferentially to calreticulin-labeled foci within the youngest cross walls, where they assemble into tubules. During cell division, they colocalize in the cell plate with KNOLLE, a cytokinesis-specific syntaxin (By similarity).</text>
</comment>
<comment type="subcellular location">
    <molecule>Protein 2A</molecule>
    <subcellularLocation>
        <location evidence="1">Host cytoplasm</location>
    </subcellularLocation>
    <subcellularLocation>
        <location evidence="1">Host nucleus</location>
    </subcellularLocation>
    <text evidence="1">Cytoplasmic early in infection. Later in infection, it becomes progressively concentrated around the nucleus, where it forms large aggregates (By similarity).</text>
</comment>
<comment type="subcellular location">
    <molecule>Coat protein</molecule>
    <subcellularLocation>
        <location evidence="2">Virion</location>
    </subcellularLocation>
</comment>
<comment type="PTM">
    <text evidence="1">Specific enzymatic cleavages in vivo by the P1 encoded 3C-like protease yield mature proteins.</text>
</comment>
<comment type="PTM">
    <text>The N-terminus of the coat protein is blocked.</text>
</comment>
<comment type="miscellaneous">
    <text>Virions are comprised of 60 copies of the coat protein.</text>
</comment>
<comment type="similarity">
    <text evidence="2">Belongs to the nepoviruses RNA2 polyprotein family.</text>
</comment>
<name>POL2_GCMV</name>